<name>TGB1_PCV87</name>
<reference key="1">
    <citation type="journal article" date="1993" name="Virology">
        <title>Nucleotide sequence and genetic organization of peanut clump virus RNA 2 and partial characterization of deleted forms.</title>
        <authorList>
            <person name="Manohar S.K."/>
            <person name="Guilley H."/>
            <person name="Dollet M."/>
            <person name="Richards K."/>
            <person name="Jonard G."/>
        </authorList>
    </citation>
    <scope>NUCLEOTIDE SEQUENCE [GENOMIC RNA]</scope>
</reference>
<reference key="2">
    <citation type="journal article" date="1998" name="Virology">
        <title>Identification of genes involved in replication and movement of peanut clump virus.</title>
        <authorList>
            <person name="Herzog E."/>
            <person name="Hemmer O."/>
            <person name="Hauser S."/>
            <person name="Meyer G."/>
            <person name="Bouzoubaa S."/>
            <person name="Fritsch C."/>
        </authorList>
    </citation>
    <scope>FUNCTION</scope>
</reference>
<reference key="3">
    <citation type="journal article" date="1999" name="Virology">
        <title>The first triple gene block protein of peanut clump virus localizes to the plasmodesmata during virus infection.</title>
        <authorList>
            <person name="Erhardt M."/>
            <person name="Stussi-Garaud C."/>
            <person name="Guilley H."/>
            <person name="Richards K.E."/>
            <person name="Jonard G."/>
            <person name="Bouzoubaa S."/>
        </authorList>
    </citation>
    <scope>SUBCELLULAR LOCATION</scope>
</reference>
<sequence>MEWRRAFSKKKLEEKVKNMDAKQATDYLLEKVDEQRNLENKLDKRLQNTRKKNKNKEKTRTWAEKYPPVDYYSPEFVENFMKDMRREEFEKSEERRGHKQVRLGSDNFVGDDPLKVLSEEALKAGFQHTGKVMKRFPADVFEKSKFIGMYDRHLTTLREKACCKKERNQIQSKLIQLRQLKPSCDFLAGTVSGVPGSGKSTLLKNVQKKLKNSVCLLANKELKGDFAGVPSVFSVEEMLLSAVPSSFNVMLVDEYTLTQSAEILLLQRKLGAKIVVLFGDREQGNTNKLTSPEWLHVPIVFSSDSSHRFGPETAKFCEDQGFSLEGRGGEDKIVKGDYEGEGEDTEVNLCFTEETKADLAEVQVEAFLVSSVQGRTFSSVSLFVRENDKPVFSDPHLRLVAITRHRKLLSIRADPEVWVSFMFATREGEEVDTHCYGEEHRPDEAE</sequence>
<proteinExistence type="inferred from homology"/>
<accession>Q08317</accession>
<organismHost>
    <name type="scientific">Arachis hypogaea</name>
    <name type="common">Peanut</name>
    <dbReference type="NCBI Taxonomy" id="3818"/>
</organismHost>
<organismHost>
    <name type="scientific">Setaria italica</name>
    <name type="common">Foxtail millet</name>
    <name type="synonym">Panicum italicum</name>
    <dbReference type="NCBI Taxonomy" id="4555"/>
</organismHost>
<organismHost>
    <name type="scientific">Sorghum arundinaceum</name>
    <dbReference type="NCBI Taxonomy" id="91525"/>
</organismHost>
<organismHost>
    <name type="scientific">Sorghum bicolor</name>
    <name type="common">Sorghum</name>
    <name type="synonym">Sorghum vulgare</name>
    <dbReference type="NCBI Taxonomy" id="4558"/>
</organismHost>
<evidence type="ECO:0000250" key="1">
    <source>
        <dbReference type="UniProtKB" id="P04867"/>
    </source>
</evidence>
<evidence type="ECO:0000250" key="2">
    <source>
        <dbReference type="UniProtKB" id="Q9IV54"/>
    </source>
</evidence>
<evidence type="ECO:0000255" key="3"/>
<evidence type="ECO:0000256" key="4">
    <source>
        <dbReference type="SAM" id="MobiDB-lite"/>
    </source>
</evidence>
<evidence type="ECO:0000269" key="5">
    <source>
    </source>
</evidence>
<evidence type="ECO:0000269" key="6">
    <source>
    </source>
</evidence>
<evidence type="ECO:0000305" key="7"/>
<protein>
    <recommendedName>
        <fullName>Movement protein TGB1</fullName>
        <ecNumber evidence="1">3.6.4.-</ecNumber>
    </recommendedName>
    <alternativeName>
        <fullName>P51</fullName>
    </alternativeName>
    <alternativeName>
        <fullName>Triple gene block 1 protein</fullName>
        <shortName>TGBp1</shortName>
    </alternativeName>
</protein>
<feature type="chain" id="PRO_0000409149" description="Movement protein TGB1">
    <location>
        <begin position="1"/>
        <end position="446"/>
    </location>
</feature>
<feature type="domain" description="(+)RNA virus helicase ATP-binding">
    <location>
        <begin position="160"/>
        <end position="303"/>
    </location>
</feature>
<feature type="domain" description="(+)RNA virus helicase C-terminal">
    <location>
        <begin position="304"/>
        <end position="444"/>
    </location>
</feature>
<feature type="region of interest" description="Disordered" evidence="4">
    <location>
        <begin position="40"/>
        <end position="60"/>
    </location>
</feature>
<feature type="binding site" evidence="3">
    <location>
        <begin position="193"/>
        <end position="200"/>
    </location>
    <ligand>
        <name>ATP</name>
        <dbReference type="ChEBI" id="CHEBI:30616"/>
    </ligand>
</feature>
<organism>
    <name type="scientific">Peanut clump virus (isolate 87/TGTA2)</name>
    <name type="common">PCV</name>
    <dbReference type="NCBI Taxonomy" id="652837"/>
    <lineage>
        <taxon>Viruses</taxon>
        <taxon>Riboviria</taxon>
        <taxon>Orthornavirae</taxon>
        <taxon>Kitrinoviricota</taxon>
        <taxon>Alsuviricetes</taxon>
        <taxon>Martellivirales</taxon>
        <taxon>Virgaviridae</taxon>
        <taxon>Pecluvirus</taxon>
        <taxon>Peanut clump virus</taxon>
    </lineage>
</organism>
<keyword id="KW-0067">ATP-binding</keyword>
<keyword id="KW-1031">Host cell junction</keyword>
<keyword id="KW-1035">Host cytoplasm</keyword>
<keyword id="KW-1037">Host cytoskeleton</keyword>
<keyword id="KW-1048">Host nucleus</keyword>
<keyword id="KW-0378">Hydrolase</keyword>
<keyword id="KW-0547">Nucleotide-binding</keyword>
<keyword id="KW-1185">Reference proteome</keyword>
<keyword id="KW-0813">Transport</keyword>
<keyword id="KW-0916">Viral movement protein</keyword>
<dbReference type="EC" id="3.6.4.-" evidence="1"/>
<dbReference type="EMBL" id="L07269">
    <property type="protein sequence ID" value="AAA17438.1"/>
    <property type="molecule type" value="Unassigned_DNA"/>
</dbReference>
<dbReference type="RefSeq" id="NP_620030.1">
    <property type="nucleotide sequence ID" value="NC_003668.1"/>
</dbReference>
<dbReference type="SMR" id="Q08317"/>
<dbReference type="GeneID" id="991040"/>
<dbReference type="KEGG" id="vg:991040"/>
<dbReference type="Proteomes" id="UP000001668">
    <property type="component" value="Genome"/>
</dbReference>
<dbReference type="GO" id="GO:0030430">
    <property type="term" value="C:host cell cytoplasm"/>
    <property type="evidence" value="ECO:0007669"/>
    <property type="project" value="UniProtKB-SubCell"/>
</dbReference>
<dbReference type="GO" id="GO:0044196">
    <property type="term" value="C:host cell nucleolus"/>
    <property type="evidence" value="ECO:0007669"/>
    <property type="project" value="UniProtKB-SubCell"/>
</dbReference>
<dbReference type="GO" id="GO:0044219">
    <property type="term" value="C:host cell plasmodesma"/>
    <property type="evidence" value="ECO:0007669"/>
    <property type="project" value="UniProtKB-SubCell"/>
</dbReference>
<dbReference type="GO" id="GO:0044163">
    <property type="term" value="C:host cytoskeleton"/>
    <property type="evidence" value="ECO:0007669"/>
    <property type="project" value="UniProtKB-SubCell"/>
</dbReference>
<dbReference type="GO" id="GO:0005524">
    <property type="term" value="F:ATP binding"/>
    <property type="evidence" value="ECO:0007669"/>
    <property type="project" value="UniProtKB-KW"/>
</dbReference>
<dbReference type="GO" id="GO:0016787">
    <property type="term" value="F:hydrolase activity"/>
    <property type="evidence" value="ECO:0007669"/>
    <property type="project" value="UniProtKB-KW"/>
</dbReference>
<dbReference type="GO" id="GO:0046740">
    <property type="term" value="P:transport of virus in host, cell to cell"/>
    <property type="evidence" value="ECO:0007669"/>
    <property type="project" value="UniProtKB-KW"/>
</dbReference>
<dbReference type="Gene3D" id="3.40.50.300">
    <property type="entry name" value="P-loop containing nucleotide triphosphate hydrolases"/>
    <property type="match status" value="2"/>
</dbReference>
<dbReference type="InterPro" id="IPR027351">
    <property type="entry name" value="(+)RNA_virus_helicase_core_dom"/>
</dbReference>
<dbReference type="InterPro" id="IPR027417">
    <property type="entry name" value="P-loop_NTPase"/>
</dbReference>
<dbReference type="Pfam" id="PF01443">
    <property type="entry name" value="Viral_helicase1"/>
    <property type="match status" value="1"/>
</dbReference>
<dbReference type="SUPFAM" id="SSF52540">
    <property type="entry name" value="P-loop containing nucleoside triphosphate hydrolases"/>
    <property type="match status" value="1"/>
</dbReference>
<dbReference type="PROSITE" id="PS51657">
    <property type="entry name" value="PSRV_HELICASE"/>
    <property type="match status" value="1"/>
</dbReference>
<comment type="function">
    <text evidence="1 6">Participates in the transport of viral genome to neighboring plant cells directly through plasmodesmata, without any budding (PubMed:9721240). Multifunctional movement protein with RNA-binding, ATPase and helicase activities (By similarity). Engages in homologous interactions leading to the formation of a ribonucleoprotein complex containing plus-sense viral RNAs (vRNPs) (By similarity). ATPase activity is probably required for vRNPs movement complex assembly (By similarity). Intracellular delivery of TGBp1-containing vRNPs to plasmodesmata is facilitated by TGBp2 and TGBp3 (By similarity).</text>
</comment>
<comment type="catalytic activity">
    <reaction evidence="1">
        <text>ATP + H2O = ADP + phosphate + H(+)</text>
        <dbReference type="Rhea" id="RHEA:13065"/>
        <dbReference type="ChEBI" id="CHEBI:15377"/>
        <dbReference type="ChEBI" id="CHEBI:15378"/>
        <dbReference type="ChEBI" id="CHEBI:30616"/>
        <dbReference type="ChEBI" id="CHEBI:43474"/>
        <dbReference type="ChEBI" id="CHEBI:456216"/>
    </reaction>
</comment>
<comment type="cofactor">
    <cofactor evidence="1">
        <name>Mg(2+)</name>
        <dbReference type="ChEBI" id="CHEBI:18420"/>
    </cofactor>
</comment>
<comment type="subunit">
    <text evidence="1">Homooligomer. Interacts with movement protein TGB3. TGB1-TGB3-TGB2 complex formation is enhanced by ATP hydrolysis. Interacts with the suppressor of RNA silencing (via N-terminus).</text>
</comment>
<comment type="subcellular location">
    <subcellularLocation>
        <location evidence="5">Host cell junction</location>
        <location evidence="5">Host plasmodesma</location>
    </subcellularLocation>
    <subcellularLocation>
        <location evidence="1">Host nucleus</location>
    </subcellularLocation>
    <subcellularLocation>
        <location evidence="1">Host cytoplasm</location>
    </subcellularLocation>
    <subcellularLocation>
        <location evidence="1">Host nucleus</location>
        <location evidence="1">Host nucleolus</location>
    </subcellularLocation>
    <subcellularLocation>
        <location evidence="2">Host cytoplasm</location>
        <location evidence="2">Host cytoskeleton</location>
    </subcellularLocation>
    <text evidence="1 2">TGB1 nuclear-cytoplasmic trafficking is required for cell-to-cell movement and systemic infection (By similarity). Associates with host microtubules (By similarity).</text>
</comment>
<comment type="similarity">
    <text evidence="7">Belongs to the virgaviridae/benyvirus TGB1 movement protein family.</text>
</comment>